<accession>O59859</accession>
<reference key="1">
    <citation type="submission" date="1998-04" db="EMBL/GenBank/DDBJ databases">
        <authorList>
            <person name="Arai M."/>
            <person name="Kawaguchi T."/>
            <person name="Sumitani J."/>
        </authorList>
    </citation>
    <scope>NUCLEOTIDE SEQUENCE [GENOMIC DNA]</scope>
</reference>
<evidence type="ECO:0000250" key="1"/>
<evidence type="ECO:0000255" key="2"/>
<evidence type="ECO:0000255" key="3">
    <source>
        <dbReference type="PROSITE-ProRule" id="PRU01096"/>
    </source>
</evidence>
<evidence type="ECO:0000255" key="4">
    <source>
        <dbReference type="PROSITE-ProRule" id="PRU10061"/>
    </source>
</evidence>
<evidence type="ECO:0000305" key="5"/>
<organism>
    <name type="scientific">Aspergillus aculeatus</name>
    <dbReference type="NCBI Taxonomy" id="5053"/>
    <lineage>
        <taxon>Eukaryota</taxon>
        <taxon>Fungi</taxon>
        <taxon>Dikarya</taxon>
        <taxon>Ascomycota</taxon>
        <taxon>Pezizomycotina</taxon>
        <taxon>Eurotiomycetes</taxon>
        <taxon>Eurotiomycetidae</taxon>
        <taxon>Eurotiales</taxon>
        <taxon>Aspergillaceae</taxon>
        <taxon>Aspergillus</taxon>
        <taxon>Aspergillus subgen. Circumdati</taxon>
    </lineage>
</organism>
<comment type="catalytic activity">
    <reaction>
        <text>Endohydrolysis of (1-&gt;4)-beta-D-xylosidic linkages in xylans.</text>
        <dbReference type="EC" id="3.2.1.8"/>
    </reaction>
</comment>
<comment type="pathway">
    <text>Glycan degradation; xylan degradation.</text>
</comment>
<comment type="subcellular location">
    <subcellularLocation>
        <location evidence="1">Secreted</location>
    </subcellularLocation>
</comment>
<comment type="similarity">
    <text evidence="5">Belongs to the glycosyl hydrolase 10 (cellulase F) family.</text>
</comment>
<feature type="signal peptide" evidence="2">
    <location>
        <begin position="1"/>
        <end position="19"/>
    </location>
</feature>
<feature type="propeptide" id="PRO_0000007963" evidence="2">
    <location>
        <begin position="20"/>
        <end position="25"/>
    </location>
</feature>
<feature type="chain" id="PRO_0000007964" description="Endo-1,4-beta-xylanase">
    <location>
        <begin position="26"/>
        <end position="327"/>
    </location>
</feature>
<feature type="domain" description="GH10" evidence="3">
    <location>
        <begin position="55"/>
        <end position="326"/>
    </location>
</feature>
<feature type="active site" description="Proton donor" evidence="1">
    <location>
        <position position="157"/>
    </location>
</feature>
<feature type="active site" description="Nucleophile" evidence="4">
    <location>
        <position position="263"/>
    </location>
</feature>
<feature type="modified residue" description="Pyrrolidone carboxylic acid" evidence="1">
    <location>
        <position position="26"/>
    </location>
</feature>
<feature type="disulfide bond" evidence="1">
    <location>
        <begin position="281"/>
        <end position="287"/>
    </location>
</feature>
<dbReference type="EC" id="3.2.1.8"/>
<dbReference type="EMBL" id="AB013110">
    <property type="protein sequence ID" value="BAA25847.1"/>
    <property type="molecule type" value="Genomic_DNA"/>
</dbReference>
<dbReference type="SMR" id="O59859"/>
<dbReference type="CAZy" id="GH10">
    <property type="family name" value="Glycoside Hydrolase Family 10"/>
</dbReference>
<dbReference type="VEuPathDB" id="FungiDB:ASPACDRAFT_1855989"/>
<dbReference type="UniPathway" id="UPA00114"/>
<dbReference type="GO" id="GO:0005576">
    <property type="term" value="C:extracellular region"/>
    <property type="evidence" value="ECO:0007669"/>
    <property type="project" value="UniProtKB-SubCell"/>
</dbReference>
<dbReference type="GO" id="GO:0031176">
    <property type="term" value="F:endo-1,4-beta-xylanase activity"/>
    <property type="evidence" value="ECO:0007669"/>
    <property type="project" value="UniProtKB-EC"/>
</dbReference>
<dbReference type="GO" id="GO:0045493">
    <property type="term" value="P:xylan catabolic process"/>
    <property type="evidence" value="ECO:0007669"/>
    <property type="project" value="UniProtKB-UniPathway"/>
</dbReference>
<dbReference type="FunFam" id="3.20.20.80:FF:000094">
    <property type="entry name" value="Endo-1,4-beta-xylanase"/>
    <property type="match status" value="1"/>
</dbReference>
<dbReference type="Gene3D" id="3.20.20.80">
    <property type="entry name" value="Glycosidases"/>
    <property type="match status" value="1"/>
</dbReference>
<dbReference type="InterPro" id="IPR044846">
    <property type="entry name" value="GH10"/>
</dbReference>
<dbReference type="InterPro" id="IPR031158">
    <property type="entry name" value="GH10_AS"/>
</dbReference>
<dbReference type="InterPro" id="IPR001000">
    <property type="entry name" value="GH10_dom"/>
</dbReference>
<dbReference type="InterPro" id="IPR017853">
    <property type="entry name" value="Glycoside_hydrolase_SF"/>
</dbReference>
<dbReference type="PANTHER" id="PTHR31490:SF76">
    <property type="entry name" value="ENDO-1,4-BETA-XYLANASE C"/>
    <property type="match status" value="1"/>
</dbReference>
<dbReference type="PANTHER" id="PTHR31490">
    <property type="entry name" value="GLYCOSYL HYDROLASE"/>
    <property type="match status" value="1"/>
</dbReference>
<dbReference type="Pfam" id="PF00331">
    <property type="entry name" value="Glyco_hydro_10"/>
    <property type="match status" value="1"/>
</dbReference>
<dbReference type="PRINTS" id="PR00134">
    <property type="entry name" value="GLHYDRLASE10"/>
</dbReference>
<dbReference type="SMART" id="SM00633">
    <property type="entry name" value="Glyco_10"/>
    <property type="match status" value="1"/>
</dbReference>
<dbReference type="SUPFAM" id="SSF51445">
    <property type="entry name" value="(Trans)glycosidases"/>
    <property type="match status" value="1"/>
</dbReference>
<dbReference type="PROSITE" id="PS00591">
    <property type="entry name" value="GH10_1"/>
    <property type="match status" value="1"/>
</dbReference>
<dbReference type="PROSITE" id="PS51760">
    <property type="entry name" value="GH10_2"/>
    <property type="match status" value="1"/>
</dbReference>
<gene>
    <name type="primary">xynIA</name>
</gene>
<name>XYNA_ASPAC</name>
<sequence>MVQIKAAALAVLFASNVLANPIEPRQASVSIDAKFKAHGKKYLGTIGDQYTLNKNAKTPAIIKADFGQLTPENSMKWDATEPNRGQFSFSGSDYLVNFAQSNGKLIRGHTLVWHSQLPSWVQSIYDKGTLIQVMQNHIATVMQRYKGKVYAWDVVNEIFNEDGSLRQSHFYNVIGEDYVRIAFETARAVDPNAKLYINDYNLDSASYPKLTGLVNHVKKWVAAGVPIDGIGSQTHLSAGAGAAVSGALNALAGAGTKEVAITELDIAGASSTDYVNVVKACLNQPKCVGITVWGVADPDSWRSSSSPLLFDSNYNPKAAYTAIANAL</sequence>
<keyword id="KW-0119">Carbohydrate metabolism</keyword>
<keyword id="KW-1015">Disulfide bond</keyword>
<keyword id="KW-0326">Glycosidase</keyword>
<keyword id="KW-0378">Hydrolase</keyword>
<keyword id="KW-0624">Polysaccharide degradation</keyword>
<keyword id="KW-0873">Pyrrolidone carboxylic acid</keyword>
<keyword id="KW-0964">Secreted</keyword>
<keyword id="KW-0732">Signal</keyword>
<keyword id="KW-0858">Xylan degradation</keyword>
<proteinExistence type="inferred from homology"/>
<protein>
    <recommendedName>
        <fullName>Endo-1,4-beta-xylanase</fullName>
        <shortName>Xylanase</shortName>
        <ecNumber>3.2.1.8</ecNumber>
    </recommendedName>
    <alternativeName>
        <fullName>1,4-beta-D-xylan xylanohydrolase</fullName>
    </alternativeName>
    <alternativeName>
        <fullName>FIA-xylanase</fullName>
    </alternativeName>
</protein>